<feature type="chain" id="PRO_0000462286" description="C2H2-type transcription factor MSN2">
    <location>
        <begin position="1"/>
        <end position="530"/>
    </location>
</feature>
<feature type="zinc finger region" description="C2H2-type 1" evidence="2">
    <location>
        <begin position="409"/>
        <end position="432"/>
    </location>
</feature>
<feature type="zinc finger region" description="C2H2-type 2" evidence="2">
    <location>
        <begin position="438"/>
        <end position="460"/>
    </location>
</feature>
<name>MSN2_METRA</name>
<proteinExistence type="inferred from homology"/>
<gene>
    <name evidence="4" type="primary">MSN2</name>
    <name type="ORF">MAA_05724</name>
</gene>
<reference key="1">
    <citation type="journal article" date="2011" name="PLoS Genet.">
        <title>Genome sequencing and comparative transcriptomics of the model entomopathogenic fungi Metarhizium anisopliae and M. acridum.</title>
        <authorList>
            <person name="Gao Q."/>
            <person name="Jin K."/>
            <person name="Ying S.-H."/>
            <person name="Zhang Y."/>
            <person name="Xiao G."/>
            <person name="Shang Y."/>
            <person name="Duan Z."/>
            <person name="Hu X."/>
            <person name="Xie X.-Q."/>
            <person name="Zhou G."/>
            <person name="Peng G."/>
            <person name="Luo Z."/>
            <person name="Huang W."/>
            <person name="Wang B."/>
            <person name="Fang W."/>
            <person name="Wang S."/>
            <person name="Zhong Y."/>
            <person name="Ma L.-J."/>
            <person name="St Leger R.J."/>
            <person name="Zhao G.-P."/>
            <person name="Pei Y."/>
            <person name="Feng M.-G."/>
            <person name="Xia Y."/>
            <person name="Wang C."/>
        </authorList>
    </citation>
    <scope>NUCLEOTIDE SEQUENCE [LARGE SCALE GENOMIC DNA]</scope>
    <source>
        <strain>ARSEF 23 / ATCC MYA-3075</strain>
    </source>
</reference>
<reference key="2">
    <citation type="journal article" date="2014" name="Proc. Natl. Acad. Sci. U.S.A.">
        <title>Trajectory and genomic determinants of fungal-pathogen speciation and host adaptation.</title>
        <authorList>
            <person name="Hu X."/>
            <person name="Xiao G."/>
            <person name="Zheng P."/>
            <person name="Shang Y."/>
            <person name="Su Y."/>
            <person name="Zhang X."/>
            <person name="Liu X."/>
            <person name="Zhan S."/>
            <person name="St Leger R.J."/>
            <person name="Wang C."/>
        </authorList>
    </citation>
    <scope>GENOME REANNOTATION</scope>
    <source>
        <strain>ARSEF 23 / ATCC MYA-3075</strain>
    </source>
</reference>
<reference key="3">
    <citation type="journal article" date="2013" name="Fungal Genet. Biol.">
        <title>Insight into the transcriptional regulation of Msn2 required for conidiation, multi-stress responses and virulence of two entomopathogenic fungi.</title>
        <authorList>
            <person name="Liu Q."/>
            <person name="Ying S.H."/>
            <person name="Li J.G."/>
            <person name="Tian C.G."/>
            <person name="Feng M.G."/>
        </authorList>
    </citation>
    <scope>FUNCTION</scope>
    <scope>DISRUPTION PHENOTYPE</scope>
</reference>
<sequence length="530" mass="56608">MDSNMMPQTAQQNAVFSKTNFAQQKLGQYQVVAPASPVCSRPGSSCSQPPTLFSNGPAVLTPTGSPPPIGFRPAVMLESEFGDSSYFPSTPPLSTSGSAVGSPKNYEVLQTPLNPMFSGLDGFVGVKSGYESTESSVLDWASCDSPPMTPVFIHSQPSRVPSLSSTTSDLSNISCPSLSPSPAPYARSVSSENDVDFCDPRNLTVPNTSNSSLAPEFTLDCLGEEEGSPSEQSALDTVLSQTAFDFSPAIASGLPAFEELSDFESEDDLSNLVKPGEGSRPRACTGSSIVSLGHGSFIADEDFSFDENDTFQFPSPSPPSSVEAVDDGHKDKRQKKTGTKDSQSAEPVMDTAAADNQTAEVEEQSEQASPVPSESHSSAEADTPSAPLPAPTNRRGRKQSLTEDPSKTFVCDLCNRRFRRQEHLKRHYRSLHTQEKPFECNECGKKFSRSDNLAQHARTHASGGAIVMNIIDNADPSAYEAGMVAPPPVDDYANYGKVLFQIAADVPGSASELSSEEASDNGKKKRKRSE</sequence>
<comment type="function">
    <text evidence="3">Transcription factor that acts as a key downstream transcription factor in the HOG1-MAPK pathway (PubMed:23466345). Plays crucial roles in the regulation of conidiation, virulence and multi-stress responses (PubMed:23466345). In addition to regulating the expression of genes specifically involved in stress-response, conidiation and virulence, controls also expression of cellular signaling factors (PubMed:23466345).</text>
</comment>
<comment type="subcellular location">
    <subcellularLocation>
        <location evidence="1">Nucleus</location>
    </subcellularLocation>
    <subcellularLocation>
        <location evidence="1">Cytoplasm</location>
    </subcellularLocation>
</comment>
<comment type="disruption phenotype">
    <text evidence="3">Shows remarkable defects in conidial yield (40% decrease) and virulence (25% decrease) (PubMed:23466345). Decreases tolerances to hyperosmolarity, oxidation, carbendazim, cell wall perturbing and high temperature at 34 degrees Celsius (PubMed:23466345). Significantly reduces the resistance of conidia to oxidation, hyperosmolarity, wet-heat stress at 45 degrees Celsius and UV-B irradiation (PubMed:23466345). Leads the repression of conidiation- and virulence-associated genes and affects also expression of stress-responsive effector genes and cellular signaling factors (PubMed:23466345).</text>
</comment>
<organism>
    <name type="scientific">Metarhizium robertsii (strain ARSEF 23 / ATCC MYA-3075)</name>
    <name type="common">Metarhizium anisopliae (strain ARSEF 23)</name>
    <dbReference type="NCBI Taxonomy" id="655844"/>
    <lineage>
        <taxon>Eukaryota</taxon>
        <taxon>Fungi</taxon>
        <taxon>Dikarya</taxon>
        <taxon>Ascomycota</taxon>
        <taxon>Pezizomycotina</taxon>
        <taxon>Sordariomycetes</taxon>
        <taxon>Hypocreomycetidae</taxon>
        <taxon>Hypocreales</taxon>
        <taxon>Clavicipitaceae</taxon>
        <taxon>Metarhizium</taxon>
    </lineage>
</organism>
<keyword id="KW-0963">Cytoplasm</keyword>
<keyword id="KW-0479">Metal-binding</keyword>
<keyword id="KW-0539">Nucleus</keyword>
<keyword id="KW-0677">Repeat</keyword>
<keyword id="KW-0804">Transcription</keyword>
<keyword id="KW-0805">Transcription regulation</keyword>
<keyword id="KW-0843">Virulence</keyword>
<keyword id="KW-0862">Zinc</keyword>
<keyword id="KW-0863">Zinc-finger</keyword>
<accession>E9F0C5</accession>
<evidence type="ECO:0000250" key="1">
    <source>
        <dbReference type="UniProtKB" id="G4NBR8"/>
    </source>
</evidence>
<evidence type="ECO:0000255" key="2">
    <source>
        <dbReference type="PROSITE-ProRule" id="PRU00042"/>
    </source>
</evidence>
<evidence type="ECO:0000269" key="3">
    <source>
    </source>
</evidence>
<evidence type="ECO:0000303" key="4">
    <source>
    </source>
</evidence>
<protein>
    <recommendedName>
        <fullName evidence="4">C2H2-type transcription factor MSN2</fullName>
    </recommendedName>
</protein>
<dbReference type="EMBL" id="ADNJ02000002">
    <property type="protein sequence ID" value="EFY98585.1"/>
    <property type="molecule type" value="Genomic_DNA"/>
</dbReference>
<dbReference type="RefSeq" id="XP_007821913.1">
    <property type="nucleotide sequence ID" value="XM_007823722.1"/>
</dbReference>
<dbReference type="GeneID" id="19260010"/>
<dbReference type="KEGG" id="maj:MAA_05724"/>
<dbReference type="HOGENOM" id="CLU_030977_1_0_1"/>
<dbReference type="OrthoDB" id="654211at2759"/>
<dbReference type="Proteomes" id="UP000002498">
    <property type="component" value="Unassembled WGS sequence"/>
</dbReference>
<dbReference type="GO" id="GO:0000785">
    <property type="term" value="C:chromatin"/>
    <property type="evidence" value="ECO:0007669"/>
    <property type="project" value="TreeGrafter"/>
</dbReference>
<dbReference type="GO" id="GO:0005634">
    <property type="term" value="C:nucleus"/>
    <property type="evidence" value="ECO:0007669"/>
    <property type="project" value="UniProtKB-SubCell"/>
</dbReference>
<dbReference type="GO" id="GO:0000981">
    <property type="term" value="F:DNA-binding transcription factor activity, RNA polymerase II-specific"/>
    <property type="evidence" value="ECO:0007669"/>
    <property type="project" value="InterPro"/>
</dbReference>
<dbReference type="GO" id="GO:0000978">
    <property type="term" value="F:RNA polymerase II cis-regulatory region sequence-specific DNA binding"/>
    <property type="evidence" value="ECO:0007669"/>
    <property type="project" value="InterPro"/>
</dbReference>
<dbReference type="GO" id="GO:0008270">
    <property type="term" value="F:zinc ion binding"/>
    <property type="evidence" value="ECO:0007669"/>
    <property type="project" value="UniProtKB-KW"/>
</dbReference>
<dbReference type="FunFam" id="3.30.160.60:FF:000141">
    <property type="entry name" value="C2H2 zinc finger protein"/>
    <property type="match status" value="1"/>
</dbReference>
<dbReference type="FunFam" id="3.30.160.60:FF:000243">
    <property type="entry name" value="Probable transcription factor steA"/>
    <property type="match status" value="1"/>
</dbReference>
<dbReference type="Gene3D" id="3.30.160.60">
    <property type="entry name" value="Classic Zinc Finger"/>
    <property type="match status" value="2"/>
</dbReference>
<dbReference type="InterPro" id="IPR051059">
    <property type="entry name" value="VerF-like"/>
</dbReference>
<dbReference type="InterPro" id="IPR036236">
    <property type="entry name" value="Znf_C2H2_sf"/>
</dbReference>
<dbReference type="InterPro" id="IPR013087">
    <property type="entry name" value="Znf_C2H2_type"/>
</dbReference>
<dbReference type="PANTHER" id="PTHR40626">
    <property type="entry name" value="MIP31509P"/>
    <property type="match status" value="1"/>
</dbReference>
<dbReference type="PANTHER" id="PTHR40626:SF13">
    <property type="entry name" value="RESPIRATION FACTOR 2-RELATED"/>
    <property type="match status" value="1"/>
</dbReference>
<dbReference type="Pfam" id="PF00096">
    <property type="entry name" value="zf-C2H2"/>
    <property type="match status" value="2"/>
</dbReference>
<dbReference type="SMART" id="SM00355">
    <property type="entry name" value="ZnF_C2H2"/>
    <property type="match status" value="2"/>
</dbReference>
<dbReference type="SUPFAM" id="SSF57667">
    <property type="entry name" value="beta-beta-alpha zinc fingers"/>
    <property type="match status" value="1"/>
</dbReference>
<dbReference type="PROSITE" id="PS00028">
    <property type="entry name" value="ZINC_FINGER_C2H2_1"/>
    <property type="match status" value="2"/>
</dbReference>
<dbReference type="PROSITE" id="PS50157">
    <property type="entry name" value="ZINC_FINGER_C2H2_2"/>
    <property type="match status" value="2"/>
</dbReference>